<dbReference type="EMBL" id="BC043812">
    <property type="protein sequence ID" value="AAH43812.1"/>
    <property type="molecule type" value="mRNA"/>
</dbReference>
<dbReference type="EMBL" id="BK001288">
    <property type="protein sequence ID" value="DAA01327.1"/>
    <property type="molecule type" value="mRNA"/>
</dbReference>
<dbReference type="RefSeq" id="NP_001080762.1">
    <property type="nucleotide sequence ID" value="NM_001087293.1"/>
</dbReference>
<dbReference type="PDB" id="6JMG">
    <property type="method" value="X-ray"/>
    <property type="resolution" value="2.70 A"/>
    <property type="chains" value="A/B=1-273"/>
</dbReference>
<dbReference type="PDBsum" id="6JMG"/>
<dbReference type="SMR" id="Q7ZYF1"/>
<dbReference type="DNASU" id="380455"/>
<dbReference type="GeneID" id="380455"/>
<dbReference type="KEGG" id="xla:380455"/>
<dbReference type="AGR" id="Xenbase:XB-GENE-6253616"/>
<dbReference type="CTD" id="380455"/>
<dbReference type="Xenbase" id="XB-GENE-6253616">
    <property type="gene designation" value="dnajc27.L"/>
</dbReference>
<dbReference type="OrthoDB" id="8830751at2759"/>
<dbReference type="Proteomes" id="UP000186698">
    <property type="component" value="Chromosome 5L"/>
</dbReference>
<dbReference type="Bgee" id="380455">
    <property type="expression patterns" value="Expressed in muscle tissue and 19 other cell types or tissues"/>
</dbReference>
<dbReference type="GO" id="GO:0005770">
    <property type="term" value="C:late endosome"/>
    <property type="evidence" value="ECO:0007669"/>
    <property type="project" value="TreeGrafter"/>
</dbReference>
<dbReference type="GO" id="GO:0005764">
    <property type="term" value="C:lysosome"/>
    <property type="evidence" value="ECO:0007669"/>
    <property type="project" value="TreeGrafter"/>
</dbReference>
<dbReference type="GO" id="GO:0005634">
    <property type="term" value="C:nucleus"/>
    <property type="evidence" value="ECO:0007669"/>
    <property type="project" value="UniProtKB-SubCell"/>
</dbReference>
<dbReference type="GO" id="GO:0045335">
    <property type="term" value="C:phagocytic vesicle"/>
    <property type="evidence" value="ECO:0007669"/>
    <property type="project" value="TreeGrafter"/>
</dbReference>
<dbReference type="GO" id="GO:0005525">
    <property type="term" value="F:GTP binding"/>
    <property type="evidence" value="ECO:0000318"/>
    <property type="project" value="GO_Central"/>
</dbReference>
<dbReference type="GO" id="GO:0003924">
    <property type="term" value="F:GTPase activity"/>
    <property type="evidence" value="ECO:0000318"/>
    <property type="project" value="GO_Central"/>
</dbReference>
<dbReference type="GO" id="GO:0090385">
    <property type="term" value="P:phagosome-lysosome fusion"/>
    <property type="evidence" value="ECO:0007669"/>
    <property type="project" value="TreeGrafter"/>
</dbReference>
<dbReference type="GO" id="GO:0016192">
    <property type="term" value="P:vesicle-mediated transport"/>
    <property type="evidence" value="ECO:0000318"/>
    <property type="project" value="GO_Central"/>
</dbReference>
<dbReference type="CDD" id="cd06257">
    <property type="entry name" value="DnaJ"/>
    <property type="match status" value="1"/>
</dbReference>
<dbReference type="CDD" id="cd04119">
    <property type="entry name" value="RJL"/>
    <property type="match status" value="1"/>
</dbReference>
<dbReference type="FunFam" id="3.40.50.300:FF:000697">
    <property type="entry name" value="DnaJ homolog subfamily C member 27"/>
    <property type="match status" value="1"/>
</dbReference>
<dbReference type="FunFam" id="1.10.287.110:FF:000019">
    <property type="entry name" value="dnaJ homolog subfamily C member 27"/>
    <property type="match status" value="1"/>
</dbReference>
<dbReference type="Gene3D" id="1.10.287.110">
    <property type="entry name" value="DnaJ domain"/>
    <property type="match status" value="1"/>
</dbReference>
<dbReference type="Gene3D" id="3.40.50.300">
    <property type="entry name" value="P-loop containing nucleotide triphosphate hydrolases"/>
    <property type="match status" value="1"/>
</dbReference>
<dbReference type="InterPro" id="IPR001623">
    <property type="entry name" value="DnaJ_domain"/>
</dbReference>
<dbReference type="InterPro" id="IPR036869">
    <property type="entry name" value="J_dom_sf"/>
</dbReference>
<dbReference type="InterPro" id="IPR027417">
    <property type="entry name" value="P-loop_NTPase"/>
</dbReference>
<dbReference type="InterPro" id="IPR005225">
    <property type="entry name" value="Small_GTP-bd"/>
</dbReference>
<dbReference type="InterPro" id="IPR001806">
    <property type="entry name" value="Small_GTPase"/>
</dbReference>
<dbReference type="NCBIfam" id="TIGR00231">
    <property type="entry name" value="small_GTP"/>
    <property type="match status" value="1"/>
</dbReference>
<dbReference type="PANTHER" id="PTHR47981">
    <property type="entry name" value="RAB FAMILY"/>
    <property type="match status" value="1"/>
</dbReference>
<dbReference type="PANTHER" id="PTHR47981:SF20">
    <property type="entry name" value="RAS-RELATED PROTEIN RAB-7A"/>
    <property type="match status" value="1"/>
</dbReference>
<dbReference type="Pfam" id="PF00226">
    <property type="entry name" value="DnaJ"/>
    <property type="match status" value="1"/>
</dbReference>
<dbReference type="Pfam" id="PF00071">
    <property type="entry name" value="Ras"/>
    <property type="match status" value="1"/>
</dbReference>
<dbReference type="PRINTS" id="PR00625">
    <property type="entry name" value="JDOMAIN"/>
</dbReference>
<dbReference type="PRINTS" id="PR00449">
    <property type="entry name" value="RASTRNSFRMNG"/>
</dbReference>
<dbReference type="SMART" id="SM00271">
    <property type="entry name" value="DnaJ"/>
    <property type="match status" value="1"/>
</dbReference>
<dbReference type="SMART" id="SM00175">
    <property type="entry name" value="RAB"/>
    <property type="match status" value="1"/>
</dbReference>
<dbReference type="SMART" id="SM00176">
    <property type="entry name" value="RAN"/>
    <property type="match status" value="1"/>
</dbReference>
<dbReference type="SMART" id="SM00173">
    <property type="entry name" value="RAS"/>
    <property type="match status" value="1"/>
</dbReference>
<dbReference type="SMART" id="SM00174">
    <property type="entry name" value="RHO"/>
    <property type="match status" value="1"/>
</dbReference>
<dbReference type="SUPFAM" id="SSF46565">
    <property type="entry name" value="Chaperone J-domain"/>
    <property type="match status" value="1"/>
</dbReference>
<dbReference type="SUPFAM" id="SSF52540">
    <property type="entry name" value="P-loop containing nucleoside triphosphate hydrolases"/>
    <property type="match status" value="1"/>
</dbReference>
<dbReference type="PROSITE" id="PS50076">
    <property type="entry name" value="DNAJ_2"/>
    <property type="match status" value="1"/>
</dbReference>
<dbReference type="PROSITE" id="PS51419">
    <property type="entry name" value="RAB"/>
    <property type="match status" value="1"/>
</dbReference>
<organism>
    <name type="scientific">Xenopus laevis</name>
    <name type="common">African clawed frog</name>
    <dbReference type="NCBI Taxonomy" id="8355"/>
    <lineage>
        <taxon>Eukaryota</taxon>
        <taxon>Metazoa</taxon>
        <taxon>Chordata</taxon>
        <taxon>Craniata</taxon>
        <taxon>Vertebrata</taxon>
        <taxon>Euteleostomi</taxon>
        <taxon>Amphibia</taxon>
        <taxon>Batrachia</taxon>
        <taxon>Anura</taxon>
        <taxon>Pipoidea</taxon>
        <taxon>Pipidae</taxon>
        <taxon>Xenopodinae</taxon>
        <taxon>Xenopus</taxon>
        <taxon>Xenopus</taxon>
    </lineage>
</organism>
<accession>Q7ZYF1</accession>
<name>DJ27A_XENLA</name>
<protein>
    <recommendedName>
        <fullName>DnaJ homolog subfamily C member 27-A</fullName>
    </recommendedName>
    <alternativeName>
        <fullName>Rab and DnaJ domain-containing protein 1</fullName>
    </alternativeName>
    <alternativeName>
        <fullName>Rab and DnaJ domain-containing protein A</fullName>
    </alternativeName>
</protein>
<reference key="1">
    <citation type="submission" date="2003-01" db="EMBL/GenBank/DDBJ databases">
        <authorList>
            <consortium name="NIH - Xenopus Gene Collection (XGC) project"/>
        </authorList>
    </citation>
    <scope>NUCLEOTIDE SEQUENCE [LARGE SCALE MRNA]</scope>
    <source>
        <tissue>Embryo</tissue>
    </source>
</reference>
<reference key="2">
    <citation type="journal article" date="2004" name="Gene">
        <title>RJLs: a new family of Ras-related GTP-binding proteins.</title>
        <authorList>
            <person name="Nepomuceno-Silva J.L."/>
            <person name="de Melo L.D."/>
            <person name="Mendonca S.M."/>
            <person name="Paixao J.C."/>
            <person name="Lopes U.G."/>
        </authorList>
    </citation>
    <scope>IDENTIFICATION</scope>
</reference>
<comment type="function">
    <text evidence="2">GTPase possibly involved in regulation of the MEK/ERK pathway.</text>
</comment>
<comment type="subcellular location">
    <subcellularLocation>
        <location evidence="2">Nucleus</location>
    </subcellularLocation>
</comment>
<comment type="similarity">
    <text evidence="4">Belongs to the small GTPase superfamily. Rab family.</text>
</comment>
<keyword id="KW-0002">3D-structure</keyword>
<keyword id="KW-0342">GTP-binding</keyword>
<keyword id="KW-0547">Nucleotide-binding</keyword>
<keyword id="KW-0539">Nucleus</keyword>
<keyword id="KW-1185">Reference proteome</keyword>
<proteinExistence type="evidence at protein level"/>
<feature type="chain" id="PRO_0000332981" description="DnaJ homolog subfamily C member 27-A">
    <location>
        <begin position="1"/>
        <end position="273"/>
    </location>
</feature>
<feature type="domain" description="J" evidence="3">
    <location>
        <begin position="217"/>
        <end position="273"/>
    </location>
</feature>
<feature type="binding site" evidence="1">
    <location>
        <begin position="23"/>
        <end position="30"/>
    </location>
    <ligand>
        <name>GTP</name>
        <dbReference type="ChEBI" id="CHEBI:37565"/>
    </ligand>
</feature>
<feature type="binding site" evidence="1">
    <location>
        <begin position="71"/>
        <end position="75"/>
    </location>
    <ligand>
        <name>GTP</name>
        <dbReference type="ChEBI" id="CHEBI:37565"/>
    </ligand>
</feature>
<feature type="binding site" evidence="1">
    <location>
        <begin position="134"/>
        <end position="137"/>
    </location>
    <ligand>
        <name>GTP</name>
        <dbReference type="ChEBI" id="CHEBI:37565"/>
    </ligand>
</feature>
<feature type="strand" evidence="5">
    <location>
        <begin position="15"/>
        <end position="22"/>
    </location>
</feature>
<feature type="helix" evidence="5">
    <location>
        <begin position="29"/>
        <end position="38"/>
    </location>
</feature>
<feature type="strand" evidence="5">
    <location>
        <begin position="50"/>
        <end position="60"/>
    </location>
</feature>
<feature type="strand" evidence="5">
    <location>
        <begin position="63"/>
        <end position="72"/>
    </location>
</feature>
<feature type="helix" evidence="5">
    <location>
        <begin position="76"/>
        <end position="78"/>
    </location>
</feature>
<feature type="helix" evidence="5">
    <location>
        <begin position="79"/>
        <end position="82"/>
    </location>
</feature>
<feature type="helix" evidence="5">
    <location>
        <begin position="83"/>
        <end position="85"/>
    </location>
</feature>
<feature type="strand" evidence="5">
    <location>
        <begin position="90"/>
        <end position="97"/>
    </location>
</feature>
<feature type="helix" evidence="5">
    <location>
        <begin position="101"/>
        <end position="105"/>
    </location>
</feature>
<feature type="helix" evidence="5">
    <location>
        <begin position="107"/>
        <end position="117"/>
    </location>
</feature>
<feature type="turn" evidence="5">
    <location>
        <begin position="118"/>
        <end position="121"/>
    </location>
</feature>
<feature type="helix" evidence="5">
    <location>
        <begin position="124"/>
        <end position="126"/>
    </location>
</feature>
<feature type="strand" evidence="5">
    <location>
        <begin position="127"/>
        <end position="134"/>
    </location>
</feature>
<feature type="helix" evidence="5">
    <location>
        <begin position="146"/>
        <end position="154"/>
    </location>
</feature>
<feature type="turn" evidence="5">
    <location>
        <begin position="155"/>
        <end position="157"/>
    </location>
</feature>
<feature type="strand" evidence="5">
    <location>
        <begin position="159"/>
        <end position="163"/>
    </location>
</feature>
<feature type="turn" evidence="5">
    <location>
        <begin position="165"/>
        <end position="167"/>
    </location>
</feature>
<feature type="helix" evidence="5">
    <location>
        <begin position="171"/>
        <end position="187"/>
    </location>
</feature>
<feature type="turn" evidence="5">
    <location>
        <begin position="188"/>
        <end position="190"/>
    </location>
</feature>
<feature type="helix" evidence="5">
    <location>
        <begin position="196"/>
        <end position="198"/>
    </location>
</feature>
<feature type="helix" evidence="5">
    <location>
        <begin position="203"/>
        <end position="213"/>
    </location>
</feature>
<feature type="helix" evidence="5">
    <location>
        <begin position="218"/>
        <end position="222"/>
    </location>
</feature>
<feature type="helix" evidence="5">
    <location>
        <begin position="230"/>
        <end position="244"/>
    </location>
</feature>
<feature type="turn" evidence="5">
    <location>
        <begin position="246"/>
        <end position="248"/>
    </location>
</feature>
<feature type="helix" evidence="5">
    <location>
        <begin position="254"/>
        <end position="273"/>
    </location>
</feature>
<evidence type="ECO:0000250" key="1"/>
<evidence type="ECO:0000250" key="2">
    <source>
        <dbReference type="UniProtKB" id="Q8CFP6"/>
    </source>
</evidence>
<evidence type="ECO:0000255" key="3">
    <source>
        <dbReference type="PROSITE-ProRule" id="PRU00286"/>
    </source>
</evidence>
<evidence type="ECO:0000305" key="4"/>
<evidence type="ECO:0007829" key="5">
    <source>
        <dbReference type="PDB" id="6JMG"/>
    </source>
</evidence>
<sequence>METNLQKRKDSRKALRIKVISMGNAEVGKSCIIKRYCEKRFVPKYQATIGIDYGVTKVHIKDREIKVNIFDMAGHPFFYEVRNEFYKDTQGVILVYDVGHKETFESLDGWLAEMKQELGPQGNIDNIVFAVCANKIDSTKHRSVDESEGRLWSESKGFLYFETSAQSGEGINEMFQAFYSAIVDLCDNGGKRPVSAINIGFTKEQADSIRRIRNCKDSWDMLGVKPGATRDEVNKAYRKLAVLLHPDKCMAPGSEDAFKAVVNARTALLKNIK</sequence>
<gene>
    <name type="primary">dnajc27-a</name>
    <name type="synonym">rbj-a</name>
    <name type="synonym">rbj1</name>
</gene>